<reference key="1">
    <citation type="journal article" date="2001" name="Plant Physiol. Biochem.">
        <title>Enzymic and structural studies on processed proteins from the vacuolar (lutoid-body) fraction of latex of Hevea brasiliensis.</title>
        <authorList>
            <person name="Subroto T."/>
            <person name="de Vries H."/>
            <person name="Schuringa J.J."/>
            <person name="Soedjanaatmadja U.M.S."/>
            <person name="Hofsteenge J."/>
            <person name="Jekel P.A."/>
            <person name="Beintema J.J."/>
        </authorList>
    </citation>
    <scope>PROTEIN SEQUENCE</scope>
    <source>
        <strain>cv. PR 261</strain>
        <tissue>Latex</tissue>
    </source>
</reference>
<keyword id="KW-0929">Antimicrobial</keyword>
<keyword id="KW-0903">Direct protein sequencing</keyword>
<keyword id="KW-1015">Disulfide bond</keyword>
<keyword id="KW-0295">Fungicide</keyword>
<keyword id="KW-0568">Pathogenesis-related protein</keyword>
<keyword id="KW-0611">Plant defense</keyword>
<protein>
    <recommendedName>
        <fullName>Osmotin-like protein</fullName>
    </recommendedName>
    <alternativeName>
        <fullName>Thaumatin-like protein</fullName>
    </alternativeName>
</protein>
<feature type="chain" id="PRO_0000096232" description="Osmotin-like protein">
    <location>
        <begin position="1"/>
        <end position="39" status="greater than"/>
    </location>
</feature>
<feature type="non-consecutive residues" evidence="1">
    <location>
        <begin position="26"/>
        <end position="27"/>
    </location>
</feature>
<feature type="non-terminal residue">
    <location>
        <position position="39"/>
    </location>
</feature>
<name>OLPA_HEVBR</name>
<organism>
    <name type="scientific">Hevea brasiliensis</name>
    <name type="common">Para rubber tree</name>
    <name type="synonym">Siphonia brasiliensis</name>
    <dbReference type="NCBI Taxonomy" id="3981"/>
    <lineage>
        <taxon>Eukaryota</taxon>
        <taxon>Viridiplantae</taxon>
        <taxon>Streptophyta</taxon>
        <taxon>Embryophyta</taxon>
        <taxon>Tracheophyta</taxon>
        <taxon>Spermatophyta</taxon>
        <taxon>Magnoliopsida</taxon>
        <taxon>eudicotyledons</taxon>
        <taxon>Gunneridae</taxon>
        <taxon>Pentapetalae</taxon>
        <taxon>rosids</taxon>
        <taxon>fabids</taxon>
        <taxon>Malpighiales</taxon>
        <taxon>Euphorbiaceae</taxon>
        <taxon>Crotonoideae</taxon>
        <taxon>Micrandreae</taxon>
        <taxon>Hevea</taxon>
    </lineage>
</organism>
<comment type="function">
    <text>May be an important antifungal protein.</text>
</comment>
<comment type="PTM">
    <text>Contains intrachain disulfide bonds.</text>
</comment>
<comment type="similarity">
    <text evidence="1">Belongs to the thaumatin family.</text>
</comment>
<dbReference type="GO" id="GO:0050832">
    <property type="term" value="P:defense response to fungus"/>
    <property type="evidence" value="ECO:0007669"/>
    <property type="project" value="UniProtKB-KW"/>
</dbReference>
<dbReference type="GO" id="GO:0031640">
    <property type="term" value="P:killing of cells of another organism"/>
    <property type="evidence" value="ECO:0007669"/>
    <property type="project" value="UniProtKB-KW"/>
</dbReference>
<dbReference type="Gene3D" id="2.60.110.10">
    <property type="entry name" value="Thaumatin"/>
    <property type="match status" value="1"/>
</dbReference>
<dbReference type="InterPro" id="IPR037176">
    <property type="entry name" value="Osmotin/thaumatin-like_sf"/>
</dbReference>
<dbReference type="SUPFAM" id="SSF49870">
    <property type="entry name" value="Osmotin, thaumatin-like protein"/>
    <property type="match status" value="1"/>
</dbReference>
<accession>P83491</accession>
<proteinExistence type="evidence at protein level"/>
<sequence>ATFTIRNNXPYTVWAAASPGGGRRLDMARIWGRTNXNFD</sequence>
<evidence type="ECO:0000305" key="1"/>